<proteinExistence type="evidence at protein level"/>
<organism>
    <name type="scientific">Actinidia deliciosa</name>
    <name type="common">Kiwi</name>
    <dbReference type="NCBI Taxonomy" id="3627"/>
    <lineage>
        <taxon>Eukaryota</taxon>
        <taxon>Viridiplantae</taxon>
        <taxon>Streptophyta</taxon>
        <taxon>Embryophyta</taxon>
        <taxon>Tracheophyta</taxon>
        <taxon>Spermatophyta</taxon>
        <taxon>Magnoliopsida</taxon>
        <taxon>eudicotyledons</taxon>
        <taxon>Gunneridae</taxon>
        <taxon>Pentapetalae</taxon>
        <taxon>asterids</taxon>
        <taxon>Ericales</taxon>
        <taxon>Actinidiaceae</taxon>
        <taxon>Actinidia</taxon>
    </lineage>
</organism>
<keyword id="KW-0020">Allergen</keyword>
<keyword id="KW-0903">Direct protein sequencing</keyword>
<keyword id="KW-1015">Disulfide bond</keyword>
<keyword id="KW-0446">Lipid-binding</keyword>
<keyword id="KW-0813">Transport</keyword>
<accession>P86137</accession>
<accession>P85205</accession>
<sequence length="92" mass="9458">AVSCGQVDTALTPCLTYLTKGGTPSTQCCSGVRSLKSMTGTKVPDRQAACNCLKQAAARYQGIKDAAAALSQKCGVQLSVPISRSTDCSKIS</sequence>
<dbReference type="SMR" id="P86137"/>
<dbReference type="Allergome" id="5737">
    <property type="allergen name" value="Act d 10"/>
</dbReference>
<dbReference type="Allergome" id="5738">
    <property type="allergen name" value="Act d 10.0101"/>
</dbReference>
<dbReference type="GO" id="GO:0008289">
    <property type="term" value="F:lipid binding"/>
    <property type="evidence" value="ECO:0007669"/>
    <property type="project" value="UniProtKB-KW"/>
</dbReference>
<dbReference type="GO" id="GO:0006869">
    <property type="term" value="P:lipid transport"/>
    <property type="evidence" value="ECO:0007669"/>
    <property type="project" value="InterPro"/>
</dbReference>
<dbReference type="CDD" id="cd01960">
    <property type="entry name" value="nsLTP1"/>
    <property type="match status" value="1"/>
</dbReference>
<dbReference type="Gene3D" id="1.10.110.10">
    <property type="entry name" value="Plant lipid-transfer and hydrophobic proteins"/>
    <property type="match status" value="1"/>
</dbReference>
<dbReference type="InterPro" id="IPR036312">
    <property type="entry name" value="Bifun_inhib/LTP/seed_sf"/>
</dbReference>
<dbReference type="InterPro" id="IPR016140">
    <property type="entry name" value="Bifunc_inhib/LTP/seed_store"/>
</dbReference>
<dbReference type="InterPro" id="IPR000528">
    <property type="entry name" value="Plant_nsLTP"/>
</dbReference>
<dbReference type="PANTHER" id="PTHR33076">
    <property type="entry name" value="NON-SPECIFIC LIPID-TRANSFER PROTEIN 2-RELATED"/>
    <property type="match status" value="1"/>
</dbReference>
<dbReference type="Pfam" id="PF00234">
    <property type="entry name" value="Tryp_alpha_amyl"/>
    <property type="match status" value="1"/>
</dbReference>
<dbReference type="PRINTS" id="PR00382">
    <property type="entry name" value="LIPIDTRNSFER"/>
</dbReference>
<dbReference type="SMART" id="SM00499">
    <property type="entry name" value="AAI"/>
    <property type="match status" value="1"/>
</dbReference>
<dbReference type="SUPFAM" id="SSF47699">
    <property type="entry name" value="Bifunctional inhibitor/lipid-transfer protein/seed storage 2S albumin"/>
    <property type="match status" value="1"/>
</dbReference>
<protein>
    <recommendedName>
        <fullName>Non-specific lipid-transfer protein 1</fullName>
        <shortName evidence="4">LTP1</shortName>
        <shortName evidence="4">nsLTP1</shortName>
    </recommendedName>
    <allergenName evidence="4">Act d 10.01</allergenName>
</protein>
<evidence type="ECO:0000250" key="1">
    <source>
        <dbReference type="UniProtKB" id="Q42952"/>
    </source>
</evidence>
<evidence type="ECO:0000255" key="2"/>
<evidence type="ECO:0000269" key="3">
    <source>
    </source>
</evidence>
<evidence type="ECO:0000303" key="4">
    <source>
    </source>
</evidence>
<evidence type="ECO:0000305" key="5"/>
<comment type="function">
    <text>Plant non-specific lipid-transfer proteins transfer phospholipids as well as galactolipids across membranes. May play a role in wax or cutin deposition in the cell walls of expanding epidermal cells and certain secretory tissues.</text>
</comment>
<comment type="tissue specificity">
    <text evidence="3">Expressed in seeds and, at very low levels, in pulp of fruit (at protein level).</text>
</comment>
<comment type="mass spectrometry" mass="9464.0" error="20.0" method="MALDI" evidence="3"/>
<comment type="allergen">
    <text evidence="3">Causes an allergic reaction in human.</text>
</comment>
<comment type="similarity">
    <text evidence="2">Belongs to the plant LTP family.</text>
</comment>
<reference evidence="5" key="1">
    <citation type="journal article" date="2011" name="PLoS ONE">
        <title>Allergenic lipid transfer proteins from plant-derived foods do not immunologically and clinically behave homogeneously: the kiwifruit LTP as a model.</title>
        <authorList>
            <person name="Bernardi M.L."/>
            <person name="Giangrieco I."/>
            <person name="Camardella L."/>
            <person name="Ferrara R."/>
            <person name="Palazzo P."/>
            <person name="Panico M.R."/>
            <person name="Crescenzo R."/>
            <person name="Carratore V."/>
            <person name="Zennaro D."/>
            <person name="Liso M."/>
            <person name="Santoro M."/>
            <person name="Zuzzi S."/>
            <person name="Tamburrini M."/>
            <person name="Ciardiello M.A."/>
            <person name="Mari A."/>
        </authorList>
    </citation>
    <scope>PROTEIN SEQUENCE</scope>
    <scope>TISSUE SPECIFICITY</scope>
    <scope>MASS SPECTROMETRY</scope>
    <scope>ALLERGENICITY</scope>
    <source>
        <tissue evidence="3">Seed</tissue>
    </source>
</reference>
<reference evidence="5" key="2">
    <citation type="submission" date="2008-11" db="UniProtKB">
        <title>Biochemical and immunological characterization of non-specific lipid transfer protein (nsLTP) from kiwi fruit.</title>
        <authorList>
            <person name="Bublin M."/>
            <person name="Radauer C."/>
            <person name="Breiteneder H."/>
        </authorList>
    </citation>
    <scope>PROTEIN SEQUENCE OF 1-13</scope>
    <source>
        <strain evidence="3">cv. Hayward</strain>
        <tissue evidence="3">Fruit</tissue>
    </source>
</reference>
<name>NLTP1_ACTDE</name>
<feature type="chain" id="PRO_0000392467" description="Non-specific lipid-transfer protein 1">
    <location>
        <begin position="1"/>
        <end position="92"/>
    </location>
</feature>
<feature type="disulfide bond" evidence="1">
    <location>
        <begin position="4"/>
        <end position="52"/>
    </location>
</feature>
<feature type="disulfide bond" evidence="1">
    <location>
        <begin position="14"/>
        <end position="28"/>
    </location>
</feature>
<feature type="disulfide bond" evidence="1">
    <location>
        <begin position="29"/>
        <end position="74"/>
    </location>
</feature>
<feature type="disulfide bond" evidence="1">
    <location>
        <begin position="50"/>
        <end position="88"/>
    </location>
</feature>